<accession>A1A032</accession>
<protein>
    <recommendedName>
        <fullName evidence="1">Large ribosomal subunit protein uL10</fullName>
    </recommendedName>
    <alternativeName>
        <fullName evidence="2">50S ribosomal protein L10</fullName>
    </alternativeName>
</protein>
<sequence length="173" mass="18852">MKRPEKEAVVAQLTDKFRNADAIYLTEYRGLTVPQISELREKLGRDTSYTVAKNTLVRIAAKEAGIEGLDELLAGPTAVTFVKGDFIEAAKTLRDFAKTNKALIIKGGFADGTVYDAEGAKKLADLKSRPQLLAEFAGDIKATMSKAAYLFNALPTKAVRTIDALREKQEKAA</sequence>
<gene>
    <name evidence="1" type="primary">rplJ</name>
    <name type="ordered locus">BAD_0284</name>
</gene>
<feature type="chain" id="PRO_1000005471" description="Large ribosomal subunit protein uL10">
    <location>
        <begin position="1"/>
        <end position="173"/>
    </location>
</feature>
<reference key="1">
    <citation type="submission" date="2006-12" db="EMBL/GenBank/DDBJ databases">
        <title>Bifidobacterium adolescentis complete genome sequence.</title>
        <authorList>
            <person name="Suzuki T."/>
            <person name="Tsuda Y."/>
            <person name="Kanou N."/>
            <person name="Inoue T."/>
            <person name="Kumazaki K."/>
            <person name="Nagano S."/>
            <person name="Hirai S."/>
            <person name="Tanaka K."/>
            <person name="Watanabe K."/>
        </authorList>
    </citation>
    <scope>NUCLEOTIDE SEQUENCE [LARGE SCALE GENOMIC DNA]</scope>
    <source>
        <strain>ATCC 15703 / DSM 20083 / NCTC 11814 / E194a</strain>
    </source>
</reference>
<comment type="function">
    <text evidence="1">Forms part of the ribosomal stalk, playing a central role in the interaction of the ribosome with GTP-bound translation factors.</text>
</comment>
<comment type="subunit">
    <text evidence="1">Part of the ribosomal stalk of the 50S ribosomal subunit. The N-terminus interacts with L11 and the large rRNA to form the base of the stalk. The C-terminus forms an elongated spine to which L12 dimers bind in a sequential fashion forming a multimeric L10(L12)X complex.</text>
</comment>
<comment type="similarity">
    <text evidence="1">Belongs to the universal ribosomal protein uL10 family.</text>
</comment>
<organism>
    <name type="scientific">Bifidobacterium adolescentis (strain ATCC 15703 / DSM 20083 / NCTC 11814 / E194a)</name>
    <dbReference type="NCBI Taxonomy" id="367928"/>
    <lineage>
        <taxon>Bacteria</taxon>
        <taxon>Bacillati</taxon>
        <taxon>Actinomycetota</taxon>
        <taxon>Actinomycetes</taxon>
        <taxon>Bifidobacteriales</taxon>
        <taxon>Bifidobacteriaceae</taxon>
        <taxon>Bifidobacterium</taxon>
    </lineage>
</organism>
<evidence type="ECO:0000255" key="1">
    <source>
        <dbReference type="HAMAP-Rule" id="MF_00362"/>
    </source>
</evidence>
<evidence type="ECO:0000305" key="2"/>
<proteinExistence type="inferred from homology"/>
<keyword id="KW-1185">Reference proteome</keyword>
<keyword id="KW-0687">Ribonucleoprotein</keyword>
<keyword id="KW-0689">Ribosomal protein</keyword>
<keyword id="KW-0694">RNA-binding</keyword>
<keyword id="KW-0699">rRNA-binding</keyword>
<dbReference type="EMBL" id="AP009256">
    <property type="protein sequence ID" value="BAF39065.1"/>
    <property type="molecule type" value="Genomic_DNA"/>
</dbReference>
<dbReference type="RefSeq" id="WP_003807864.1">
    <property type="nucleotide sequence ID" value="NZ_CAXVNC010000001.1"/>
</dbReference>
<dbReference type="SMR" id="A1A032"/>
<dbReference type="STRING" id="367928.BAD_0284"/>
<dbReference type="PaxDb" id="1680-BADO_0292"/>
<dbReference type="GeneID" id="4556677"/>
<dbReference type="KEGG" id="bad:BAD_0284"/>
<dbReference type="HOGENOM" id="CLU_092227_1_0_11"/>
<dbReference type="Proteomes" id="UP000008702">
    <property type="component" value="Chromosome"/>
</dbReference>
<dbReference type="GO" id="GO:0015934">
    <property type="term" value="C:large ribosomal subunit"/>
    <property type="evidence" value="ECO:0007669"/>
    <property type="project" value="InterPro"/>
</dbReference>
<dbReference type="GO" id="GO:0070180">
    <property type="term" value="F:large ribosomal subunit rRNA binding"/>
    <property type="evidence" value="ECO:0007669"/>
    <property type="project" value="UniProtKB-UniRule"/>
</dbReference>
<dbReference type="GO" id="GO:0003735">
    <property type="term" value="F:structural constituent of ribosome"/>
    <property type="evidence" value="ECO:0007669"/>
    <property type="project" value="InterPro"/>
</dbReference>
<dbReference type="GO" id="GO:0006412">
    <property type="term" value="P:translation"/>
    <property type="evidence" value="ECO:0007669"/>
    <property type="project" value="UniProtKB-UniRule"/>
</dbReference>
<dbReference type="CDD" id="cd05797">
    <property type="entry name" value="Ribosomal_L10"/>
    <property type="match status" value="1"/>
</dbReference>
<dbReference type="Gene3D" id="3.30.70.1730">
    <property type="match status" value="1"/>
</dbReference>
<dbReference type="Gene3D" id="6.10.250.290">
    <property type="match status" value="1"/>
</dbReference>
<dbReference type="HAMAP" id="MF_00362">
    <property type="entry name" value="Ribosomal_uL10"/>
    <property type="match status" value="1"/>
</dbReference>
<dbReference type="InterPro" id="IPR001790">
    <property type="entry name" value="Ribosomal_uL10"/>
</dbReference>
<dbReference type="InterPro" id="IPR043141">
    <property type="entry name" value="Ribosomal_uL10-like_sf"/>
</dbReference>
<dbReference type="InterPro" id="IPR022973">
    <property type="entry name" value="Ribosomal_uL10_bac"/>
</dbReference>
<dbReference type="InterPro" id="IPR047865">
    <property type="entry name" value="Ribosomal_uL10_bac_type"/>
</dbReference>
<dbReference type="InterPro" id="IPR002363">
    <property type="entry name" value="Ribosomal_uL10_CS_bac"/>
</dbReference>
<dbReference type="NCBIfam" id="NF000955">
    <property type="entry name" value="PRK00099.1-1"/>
    <property type="match status" value="1"/>
</dbReference>
<dbReference type="PANTHER" id="PTHR11560">
    <property type="entry name" value="39S RIBOSOMAL PROTEIN L10, MITOCHONDRIAL"/>
    <property type="match status" value="1"/>
</dbReference>
<dbReference type="Pfam" id="PF00466">
    <property type="entry name" value="Ribosomal_L10"/>
    <property type="match status" value="1"/>
</dbReference>
<dbReference type="SUPFAM" id="SSF160369">
    <property type="entry name" value="Ribosomal protein L10-like"/>
    <property type="match status" value="1"/>
</dbReference>
<dbReference type="PROSITE" id="PS01109">
    <property type="entry name" value="RIBOSOMAL_L10"/>
    <property type="match status" value="1"/>
</dbReference>
<name>RL10_BIFAA</name>